<proteinExistence type="evidence at protein level"/>
<feature type="chain" id="PRO_0000194406" description="AMP deaminase 1">
    <location>
        <begin position="1" status="less than"/>
        <end position="26" status="greater than"/>
    </location>
</feature>
<feature type="non-terminal residue">
    <location>
        <position position="1"/>
    </location>
</feature>
<feature type="non-terminal residue">
    <location>
        <position position="26"/>
    </location>
</feature>
<reference key="1">
    <citation type="journal article" date="1997" name="Comp. Biochem. Physiol.">
        <title>AMP-deaminases from chicken and rabbit muscle: partial primary sequences of homologous 17-kDa CNBr fragments: autorecognition by rabbit anti-[chicken AMPD].</title>
        <authorList>
            <person name="Chilson O.P."/>
            <person name="Kelly-Chilson A.E."/>
            <person name="Siegel N.R."/>
        </authorList>
    </citation>
    <scope>PROTEIN SEQUENCE</scope>
    <scope>FUNCTION</scope>
    <scope>CATALYTIC ACTIVITY</scope>
    <scope>PATHWAY</scope>
    <source>
        <tissue>Mammary gland</tissue>
    </source>
</reference>
<accession>P81073</accession>
<organism>
    <name type="scientific">Gallus gallus</name>
    <name type="common">Chicken</name>
    <dbReference type="NCBI Taxonomy" id="9031"/>
    <lineage>
        <taxon>Eukaryota</taxon>
        <taxon>Metazoa</taxon>
        <taxon>Chordata</taxon>
        <taxon>Craniata</taxon>
        <taxon>Vertebrata</taxon>
        <taxon>Euteleostomi</taxon>
        <taxon>Archelosauria</taxon>
        <taxon>Archosauria</taxon>
        <taxon>Dinosauria</taxon>
        <taxon>Saurischia</taxon>
        <taxon>Theropoda</taxon>
        <taxon>Coelurosauria</taxon>
        <taxon>Aves</taxon>
        <taxon>Neognathae</taxon>
        <taxon>Galloanserae</taxon>
        <taxon>Galliformes</taxon>
        <taxon>Phasianidae</taxon>
        <taxon>Phasianinae</taxon>
        <taxon>Gallus</taxon>
    </lineage>
</organism>
<dbReference type="EC" id="3.5.4.6" evidence="1"/>
<dbReference type="FunCoup" id="P81073">
    <property type="interactions" value="1"/>
</dbReference>
<dbReference type="STRING" id="9031.ENSGALP00000003242"/>
<dbReference type="PaxDb" id="9031-ENSGALP00000003242"/>
<dbReference type="eggNOG" id="KOG1096">
    <property type="taxonomic scope" value="Eukaryota"/>
</dbReference>
<dbReference type="HOGENOM" id="CLU_003782_4_0_1"/>
<dbReference type="InParanoid" id="P81073"/>
<dbReference type="OrthoDB" id="1723809at2759"/>
<dbReference type="BRENDA" id="3.5.4.6">
    <property type="organism ID" value="1306"/>
</dbReference>
<dbReference type="UniPathway" id="UPA00591">
    <property type="reaction ID" value="UER00663"/>
</dbReference>
<dbReference type="Proteomes" id="UP000000539">
    <property type="component" value="Unassembled WGS sequence"/>
</dbReference>
<dbReference type="GO" id="GO:0003876">
    <property type="term" value="F:AMP deaminase activity"/>
    <property type="evidence" value="ECO:0000314"/>
    <property type="project" value="UniProtKB"/>
</dbReference>
<dbReference type="GO" id="GO:0032264">
    <property type="term" value="P:IMP salvage"/>
    <property type="evidence" value="ECO:0007669"/>
    <property type="project" value="UniProtKB-UniPathway"/>
</dbReference>
<dbReference type="Gene3D" id="4.10.800.20">
    <property type="match status" value="1"/>
</dbReference>
<gene>
    <name type="primary">AMPD1</name>
</gene>
<name>AMPD1_CHICK</name>
<keyword id="KW-0903">Direct protein sequencing</keyword>
<keyword id="KW-0378">Hydrolase</keyword>
<keyword id="KW-0546">Nucleotide metabolism</keyword>
<keyword id="KW-1185">Reference proteome</keyword>
<comment type="function">
    <text evidence="3">AMP deaminase plays a critical role in energy metabolism.</text>
</comment>
<comment type="catalytic activity">
    <reaction evidence="1">
        <text>AMP + H2O + H(+) = IMP + NH4(+)</text>
        <dbReference type="Rhea" id="RHEA:14777"/>
        <dbReference type="ChEBI" id="CHEBI:15377"/>
        <dbReference type="ChEBI" id="CHEBI:15378"/>
        <dbReference type="ChEBI" id="CHEBI:28938"/>
        <dbReference type="ChEBI" id="CHEBI:58053"/>
        <dbReference type="ChEBI" id="CHEBI:456215"/>
        <dbReference type="EC" id="3.5.4.6"/>
    </reaction>
    <physiologicalReaction direction="left-to-right" evidence="3">
        <dbReference type="Rhea" id="RHEA:14778"/>
    </physiologicalReaction>
</comment>
<comment type="pathway">
    <text evidence="3">Purine metabolism; IMP biosynthesis via salvage pathway; IMP from AMP: step 1/1.</text>
</comment>
<comment type="subunit">
    <text>Homotetramer.</text>
</comment>
<comment type="similarity">
    <text evidence="2">Belongs to the metallo-dependent hydrolases superfamily. Adenosine and AMP deaminases family.</text>
</comment>
<evidence type="ECO:0000269" key="1">
    <source>
    </source>
</evidence>
<evidence type="ECO:0000305" key="2"/>
<evidence type="ECO:0000305" key="3">
    <source>
    </source>
</evidence>
<sequence length="26" mass="3195">MNQKHLLRFIKKSYRVDADRVVYDAK</sequence>
<protein>
    <recommendedName>
        <fullName evidence="3">AMP deaminase 1</fullName>
        <ecNumber evidence="1">3.5.4.6</ecNumber>
    </recommendedName>
    <alternativeName>
        <fullName>AMP deaminase isoform M</fullName>
    </alternativeName>
    <alternativeName>
        <fullName>Myoadenylate deaminase</fullName>
    </alternativeName>
</protein>